<keyword id="KW-0001">2Fe-2S</keyword>
<keyword id="KW-0004">4Fe-4S</keyword>
<keyword id="KW-0093">Biotin biosynthesis</keyword>
<keyword id="KW-0408">Iron</keyword>
<keyword id="KW-0411">Iron-sulfur</keyword>
<keyword id="KW-0479">Metal-binding</keyword>
<keyword id="KW-1185">Reference proteome</keyword>
<keyword id="KW-0949">S-adenosyl-L-methionine</keyword>
<keyword id="KW-0808">Transferase</keyword>
<sequence>MKTQWNFEKVKELFDQPFFDILFLAQNIHRKNFNANQIQISTLLSIKTGACPEDCKYCPQSARYKTNIKIEKLLTLKQILKSAQQAKKLGSTRFCMGAAWKNPKERDMHFLKTVIQEVKKLGLETCMTLGTLHNDQADRLAKAGLDFYNHNLDTSKSYYQKIVTTRTYQDRLNTLKKVRKSGMKICSGGILGLGEKLKDRIELLIELSNLEIAPESIPINMLVKVKGTPLENQTSIDTFDFIKTIAITRIMMPTSYIRLSAGRENMNEQTQAMCFLSGANSIFYGCKLLTTPNPKKERDKQLFSKLGLNIKHKNTNLNYSILSDNSLNYTSKIHSQQFYNAETA</sequence>
<name>BIOB_BUCBP</name>
<accession>Q89AK5</accession>
<comment type="function">
    <text evidence="1">Catalyzes the conversion of dethiobiotin (DTB) to biotin by the insertion of a sulfur atom into dethiobiotin via a radical-based mechanism.</text>
</comment>
<comment type="catalytic activity">
    <reaction evidence="1">
        <text>(4R,5S)-dethiobiotin + (sulfur carrier)-SH + 2 reduced [2Fe-2S]-[ferredoxin] + 2 S-adenosyl-L-methionine = (sulfur carrier)-H + biotin + 2 5'-deoxyadenosine + 2 L-methionine + 2 oxidized [2Fe-2S]-[ferredoxin]</text>
        <dbReference type="Rhea" id="RHEA:22060"/>
        <dbReference type="Rhea" id="RHEA-COMP:10000"/>
        <dbReference type="Rhea" id="RHEA-COMP:10001"/>
        <dbReference type="Rhea" id="RHEA-COMP:14737"/>
        <dbReference type="Rhea" id="RHEA-COMP:14739"/>
        <dbReference type="ChEBI" id="CHEBI:17319"/>
        <dbReference type="ChEBI" id="CHEBI:29917"/>
        <dbReference type="ChEBI" id="CHEBI:33737"/>
        <dbReference type="ChEBI" id="CHEBI:33738"/>
        <dbReference type="ChEBI" id="CHEBI:57586"/>
        <dbReference type="ChEBI" id="CHEBI:57844"/>
        <dbReference type="ChEBI" id="CHEBI:59789"/>
        <dbReference type="ChEBI" id="CHEBI:64428"/>
        <dbReference type="ChEBI" id="CHEBI:149473"/>
        <dbReference type="EC" id="2.8.1.6"/>
    </reaction>
</comment>
<comment type="cofactor">
    <cofactor evidence="1">
        <name>[4Fe-4S] cluster</name>
        <dbReference type="ChEBI" id="CHEBI:49883"/>
    </cofactor>
    <text evidence="1">Binds 1 [4Fe-4S] cluster. The cluster is coordinated with 3 cysteines and an exchangeable S-adenosyl-L-methionine.</text>
</comment>
<comment type="cofactor">
    <cofactor evidence="1">
        <name>[2Fe-2S] cluster</name>
        <dbReference type="ChEBI" id="CHEBI:190135"/>
    </cofactor>
    <text evidence="1">Binds 1 [2Fe-2S] cluster. The cluster is coordinated with 3 cysteines and 1 arginine.</text>
</comment>
<comment type="pathway">
    <text evidence="1">Cofactor biosynthesis; biotin biosynthesis; biotin from 7,8-diaminononanoate: step 2/2.</text>
</comment>
<comment type="subunit">
    <text evidence="1">Homodimer.</text>
</comment>
<comment type="similarity">
    <text evidence="1">Belongs to the radical SAM superfamily. Biotin synthase family.</text>
</comment>
<proteinExistence type="inferred from homology"/>
<protein>
    <recommendedName>
        <fullName evidence="1">Biotin synthase</fullName>
        <ecNumber evidence="1">2.8.1.6</ecNumber>
    </recommendedName>
</protein>
<dbReference type="EC" id="2.8.1.6" evidence="1"/>
<dbReference type="EMBL" id="AE016826">
    <property type="protein sequence ID" value="AAO26997.1"/>
    <property type="molecule type" value="Genomic_DNA"/>
</dbReference>
<dbReference type="RefSeq" id="WP_011091398.1">
    <property type="nucleotide sequence ID" value="NC_004545.1"/>
</dbReference>
<dbReference type="SMR" id="Q89AK5"/>
<dbReference type="STRING" id="224915.bbp_272"/>
<dbReference type="KEGG" id="bab:bbp_272"/>
<dbReference type="eggNOG" id="COG0502">
    <property type="taxonomic scope" value="Bacteria"/>
</dbReference>
<dbReference type="HOGENOM" id="CLU_033172_1_2_6"/>
<dbReference type="OrthoDB" id="9786826at2"/>
<dbReference type="UniPathway" id="UPA00078">
    <property type="reaction ID" value="UER00162"/>
</dbReference>
<dbReference type="Proteomes" id="UP000000601">
    <property type="component" value="Chromosome"/>
</dbReference>
<dbReference type="GO" id="GO:0051537">
    <property type="term" value="F:2 iron, 2 sulfur cluster binding"/>
    <property type="evidence" value="ECO:0007669"/>
    <property type="project" value="UniProtKB-KW"/>
</dbReference>
<dbReference type="GO" id="GO:0051539">
    <property type="term" value="F:4 iron, 4 sulfur cluster binding"/>
    <property type="evidence" value="ECO:0007669"/>
    <property type="project" value="UniProtKB-KW"/>
</dbReference>
<dbReference type="GO" id="GO:0004076">
    <property type="term" value="F:biotin synthase activity"/>
    <property type="evidence" value="ECO:0007669"/>
    <property type="project" value="UniProtKB-UniRule"/>
</dbReference>
<dbReference type="GO" id="GO:0005506">
    <property type="term" value="F:iron ion binding"/>
    <property type="evidence" value="ECO:0007669"/>
    <property type="project" value="UniProtKB-UniRule"/>
</dbReference>
<dbReference type="GO" id="GO:0009102">
    <property type="term" value="P:biotin biosynthetic process"/>
    <property type="evidence" value="ECO:0007669"/>
    <property type="project" value="UniProtKB-UniRule"/>
</dbReference>
<dbReference type="CDD" id="cd01335">
    <property type="entry name" value="Radical_SAM"/>
    <property type="match status" value="1"/>
</dbReference>
<dbReference type="FunFam" id="3.20.20.70:FF:000011">
    <property type="entry name" value="Biotin synthase"/>
    <property type="match status" value="1"/>
</dbReference>
<dbReference type="Gene3D" id="3.20.20.70">
    <property type="entry name" value="Aldolase class I"/>
    <property type="match status" value="1"/>
</dbReference>
<dbReference type="HAMAP" id="MF_01694">
    <property type="entry name" value="BioB"/>
    <property type="match status" value="1"/>
</dbReference>
<dbReference type="InterPro" id="IPR013785">
    <property type="entry name" value="Aldolase_TIM"/>
</dbReference>
<dbReference type="InterPro" id="IPR010722">
    <property type="entry name" value="BATS_dom"/>
</dbReference>
<dbReference type="InterPro" id="IPR002684">
    <property type="entry name" value="Biotin_synth/BioAB"/>
</dbReference>
<dbReference type="InterPro" id="IPR024177">
    <property type="entry name" value="Biotin_synthase"/>
</dbReference>
<dbReference type="InterPro" id="IPR006638">
    <property type="entry name" value="Elp3/MiaA/NifB-like_rSAM"/>
</dbReference>
<dbReference type="InterPro" id="IPR007197">
    <property type="entry name" value="rSAM"/>
</dbReference>
<dbReference type="NCBIfam" id="TIGR00433">
    <property type="entry name" value="bioB"/>
    <property type="match status" value="1"/>
</dbReference>
<dbReference type="PANTHER" id="PTHR22976">
    <property type="entry name" value="BIOTIN SYNTHASE"/>
    <property type="match status" value="1"/>
</dbReference>
<dbReference type="PANTHER" id="PTHR22976:SF2">
    <property type="entry name" value="BIOTIN SYNTHASE, MITOCHONDRIAL"/>
    <property type="match status" value="1"/>
</dbReference>
<dbReference type="Pfam" id="PF06968">
    <property type="entry name" value="BATS"/>
    <property type="match status" value="1"/>
</dbReference>
<dbReference type="Pfam" id="PF04055">
    <property type="entry name" value="Radical_SAM"/>
    <property type="match status" value="1"/>
</dbReference>
<dbReference type="PIRSF" id="PIRSF001619">
    <property type="entry name" value="Biotin_synth"/>
    <property type="match status" value="1"/>
</dbReference>
<dbReference type="SFLD" id="SFLDF00272">
    <property type="entry name" value="biotin_synthase"/>
    <property type="match status" value="1"/>
</dbReference>
<dbReference type="SFLD" id="SFLDS00029">
    <property type="entry name" value="Radical_SAM"/>
    <property type="match status" value="1"/>
</dbReference>
<dbReference type="SMART" id="SM00876">
    <property type="entry name" value="BATS"/>
    <property type="match status" value="1"/>
</dbReference>
<dbReference type="SMART" id="SM00729">
    <property type="entry name" value="Elp3"/>
    <property type="match status" value="1"/>
</dbReference>
<dbReference type="SUPFAM" id="SSF102114">
    <property type="entry name" value="Radical SAM enzymes"/>
    <property type="match status" value="1"/>
</dbReference>
<dbReference type="PROSITE" id="PS51918">
    <property type="entry name" value="RADICAL_SAM"/>
    <property type="match status" value="1"/>
</dbReference>
<evidence type="ECO:0000255" key="1">
    <source>
        <dbReference type="HAMAP-Rule" id="MF_01694"/>
    </source>
</evidence>
<evidence type="ECO:0000255" key="2">
    <source>
        <dbReference type="PROSITE-ProRule" id="PRU01266"/>
    </source>
</evidence>
<gene>
    <name evidence="1" type="primary">bioB</name>
    <name type="ordered locus">bbp_272</name>
</gene>
<organism>
    <name type="scientific">Buchnera aphidicola subsp. Baizongia pistaciae (strain Bp)</name>
    <dbReference type="NCBI Taxonomy" id="224915"/>
    <lineage>
        <taxon>Bacteria</taxon>
        <taxon>Pseudomonadati</taxon>
        <taxon>Pseudomonadota</taxon>
        <taxon>Gammaproteobacteria</taxon>
        <taxon>Enterobacterales</taxon>
        <taxon>Erwiniaceae</taxon>
        <taxon>Buchnera</taxon>
    </lineage>
</organism>
<feature type="chain" id="PRO_0000185549" description="Biotin synthase">
    <location>
        <begin position="1"/>
        <end position="344"/>
    </location>
</feature>
<feature type="domain" description="Radical SAM core" evidence="2">
    <location>
        <begin position="36"/>
        <end position="260"/>
    </location>
</feature>
<feature type="binding site" evidence="1">
    <location>
        <position position="51"/>
    </location>
    <ligand>
        <name>[4Fe-4S] cluster</name>
        <dbReference type="ChEBI" id="CHEBI:49883"/>
        <note>4Fe-4S-S-AdoMet</note>
    </ligand>
</feature>
<feature type="binding site" evidence="1">
    <location>
        <position position="55"/>
    </location>
    <ligand>
        <name>[4Fe-4S] cluster</name>
        <dbReference type="ChEBI" id="CHEBI:49883"/>
        <note>4Fe-4S-S-AdoMet</note>
    </ligand>
</feature>
<feature type="binding site" evidence="1">
    <location>
        <position position="58"/>
    </location>
    <ligand>
        <name>[4Fe-4S] cluster</name>
        <dbReference type="ChEBI" id="CHEBI:49883"/>
        <note>4Fe-4S-S-AdoMet</note>
    </ligand>
</feature>
<feature type="binding site" evidence="1">
    <location>
        <position position="95"/>
    </location>
    <ligand>
        <name>[2Fe-2S] cluster</name>
        <dbReference type="ChEBI" id="CHEBI:190135"/>
    </ligand>
</feature>
<feature type="binding site" evidence="1">
    <location>
        <position position="126"/>
    </location>
    <ligand>
        <name>[2Fe-2S] cluster</name>
        <dbReference type="ChEBI" id="CHEBI:190135"/>
    </ligand>
</feature>
<feature type="binding site" evidence="1">
    <location>
        <position position="186"/>
    </location>
    <ligand>
        <name>[2Fe-2S] cluster</name>
        <dbReference type="ChEBI" id="CHEBI:190135"/>
    </ligand>
</feature>
<feature type="binding site" evidence="1">
    <location>
        <position position="258"/>
    </location>
    <ligand>
        <name>[2Fe-2S] cluster</name>
        <dbReference type="ChEBI" id="CHEBI:190135"/>
    </ligand>
</feature>
<reference key="1">
    <citation type="journal article" date="2003" name="Proc. Natl. Acad. Sci. U.S.A.">
        <title>Reductive genome evolution in Buchnera aphidicola.</title>
        <authorList>
            <person name="van Ham R.C.H.J."/>
            <person name="Kamerbeek J."/>
            <person name="Palacios C."/>
            <person name="Rausell C."/>
            <person name="Abascal F."/>
            <person name="Bastolla U."/>
            <person name="Fernandez J.M."/>
            <person name="Jimenez L."/>
            <person name="Postigo M."/>
            <person name="Silva F.J."/>
            <person name="Tamames J."/>
            <person name="Viguera E."/>
            <person name="Latorre A."/>
            <person name="Valencia A."/>
            <person name="Moran F."/>
            <person name="Moya A."/>
        </authorList>
    </citation>
    <scope>NUCLEOTIDE SEQUENCE [LARGE SCALE GENOMIC DNA]</scope>
    <source>
        <strain>Bp</strain>
    </source>
</reference>